<feature type="chain" id="PRO_1000100214" description="GTP cyclohydrolase 1">
    <location>
        <begin position="1"/>
        <end position="220"/>
    </location>
</feature>
<feature type="binding site" evidence="1">
    <location>
        <position position="109"/>
    </location>
    <ligand>
        <name>Zn(2+)</name>
        <dbReference type="ChEBI" id="CHEBI:29105"/>
    </ligand>
</feature>
<feature type="binding site" evidence="1">
    <location>
        <position position="112"/>
    </location>
    <ligand>
        <name>Zn(2+)</name>
        <dbReference type="ChEBI" id="CHEBI:29105"/>
    </ligand>
</feature>
<feature type="binding site" evidence="1">
    <location>
        <position position="180"/>
    </location>
    <ligand>
        <name>Zn(2+)</name>
        <dbReference type="ChEBI" id="CHEBI:29105"/>
    </ligand>
</feature>
<comment type="catalytic activity">
    <reaction evidence="1">
        <text>GTP + H2O = 7,8-dihydroneopterin 3'-triphosphate + formate + H(+)</text>
        <dbReference type="Rhea" id="RHEA:17473"/>
        <dbReference type="ChEBI" id="CHEBI:15377"/>
        <dbReference type="ChEBI" id="CHEBI:15378"/>
        <dbReference type="ChEBI" id="CHEBI:15740"/>
        <dbReference type="ChEBI" id="CHEBI:37565"/>
        <dbReference type="ChEBI" id="CHEBI:58462"/>
        <dbReference type="EC" id="3.5.4.16"/>
    </reaction>
</comment>
<comment type="pathway">
    <text evidence="1">Cofactor biosynthesis; 7,8-dihydroneopterin triphosphate biosynthesis; 7,8-dihydroneopterin triphosphate from GTP: step 1/1.</text>
</comment>
<comment type="subunit">
    <text evidence="1">Homomer.</text>
</comment>
<comment type="similarity">
    <text evidence="1">Belongs to the GTP cyclohydrolase I family.</text>
</comment>
<accession>B1JQJ4</accession>
<keyword id="KW-0342">GTP-binding</keyword>
<keyword id="KW-0378">Hydrolase</keyword>
<keyword id="KW-0479">Metal-binding</keyword>
<keyword id="KW-0547">Nucleotide-binding</keyword>
<keyword id="KW-0554">One-carbon metabolism</keyword>
<keyword id="KW-0862">Zinc</keyword>
<sequence length="220" mass="24714">MSSLSKEAELVHQALLARGLETPLRKPELDAETRKTRIQAHMTEVMHLLNLDLTDDSLADTPRRIAKMYVDEIFSGLDYENFPKITLIQNKMKVDEMVTVRDITLTSTCEHHFVTIDGKATVAYIPKDSVIGLSKINRIVQFFAQRPQVQERLTQQILLALQTLLGTNNVAVSIDAVHYCVKARGIRDATSATTTTSLGGLFKSSQNTRQEFLRAVRHHG</sequence>
<gene>
    <name evidence="1" type="primary">folE</name>
    <name type="ordered locus">YPK_2568</name>
</gene>
<protein>
    <recommendedName>
        <fullName evidence="1">GTP cyclohydrolase 1</fullName>
        <ecNumber evidence="1">3.5.4.16</ecNumber>
    </recommendedName>
    <alternativeName>
        <fullName evidence="1">GTP cyclohydrolase I</fullName>
        <shortName evidence="1">GTP-CH-I</shortName>
    </alternativeName>
</protein>
<organism>
    <name type="scientific">Yersinia pseudotuberculosis serotype O:3 (strain YPIII)</name>
    <dbReference type="NCBI Taxonomy" id="502800"/>
    <lineage>
        <taxon>Bacteria</taxon>
        <taxon>Pseudomonadati</taxon>
        <taxon>Pseudomonadota</taxon>
        <taxon>Gammaproteobacteria</taxon>
        <taxon>Enterobacterales</taxon>
        <taxon>Yersiniaceae</taxon>
        <taxon>Yersinia</taxon>
    </lineage>
</organism>
<reference key="1">
    <citation type="submission" date="2008-02" db="EMBL/GenBank/DDBJ databases">
        <title>Complete sequence of Yersinia pseudotuberculosis YPIII.</title>
        <authorList>
            <consortium name="US DOE Joint Genome Institute"/>
            <person name="Copeland A."/>
            <person name="Lucas S."/>
            <person name="Lapidus A."/>
            <person name="Glavina del Rio T."/>
            <person name="Dalin E."/>
            <person name="Tice H."/>
            <person name="Bruce D."/>
            <person name="Goodwin L."/>
            <person name="Pitluck S."/>
            <person name="Munk A.C."/>
            <person name="Brettin T."/>
            <person name="Detter J.C."/>
            <person name="Han C."/>
            <person name="Tapia R."/>
            <person name="Schmutz J."/>
            <person name="Larimer F."/>
            <person name="Land M."/>
            <person name="Hauser L."/>
            <person name="Challacombe J.F."/>
            <person name="Green L."/>
            <person name="Lindler L.E."/>
            <person name="Nikolich M.P."/>
            <person name="Richardson P."/>
        </authorList>
    </citation>
    <scope>NUCLEOTIDE SEQUENCE [LARGE SCALE GENOMIC DNA]</scope>
    <source>
        <strain>YPIII</strain>
    </source>
</reference>
<name>GCH1_YERPY</name>
<dbReference type="EC" id="3.5.4.16" evidence="1"/>
<dbReference type="EMBL" id="CP000950">
    <property type="protein sequence ID" value="ACA68845.1"/>
    <property type="molecule type" value="Genomic_DNA"/>
</dbReference>
<dbReference type="RefSeq" id="WP_002211960.1">
    <property type="nucleotide sequence ID" value="NZ_CP009792.1"/>
</dbReference>
<dbReference type="SMR" id="B1JQJ4"/>
<dbReference type="GeneID" id="57977063"/>
<dbReference type="KEGG" id="ypy:YPK_2568"/>
<dbReference type="PATRIC" id="fig|502800.11.peg.3265"/>
<dbReference type="UniPathway" id="UPA00848">
    <property type="reaction ID" value="UER00151"/>
</dbReference>
<dbReference type="GO" id="GO:0005737">
    <property type="term" value="C:cytoplasm"/>
    <property type="evidence" value="ECO:0007669"/>
    <property type="project" value="TreeGrafter"/>
</dbReference>
<dbReference type="GO" id="GO:0005525">
    <property type="term" value="F:GTP binding"/>
    <property type="evidence" value="ECO:0007669"/>
    <property type="project" value="UniProtKB-KW"/>
</dbReference>
<dbReference type="GO" id="GO:0003934">
    <property type="term" value="F:GTP cyclohydrolase I activity"/>
    <property type="evidence" value="ECO:0007669"/>
    <property type="project" value="UniProtKB-UniRule"/>
</dbReference>
<dbReference type="GO" id="GO:0008270">
    <property type="term" value="F:zinc ion binding"/>
    <property type="evidence" value="ECO:0007669"/>
    <property type="project" value="UniProtKB-UniRule"/>
</dbReference>
<dbReference type="GO" id="GO:0006730">
    <property type="term" value="P:one-carbon metabolic process"/>
    <property type="evidence" value="ECO:0007669"/>
    <property type="project" value="UniProtKB-UniRule"/>
</dbReference>
<dbReference type="GO" id="GO:0006729">
    <property type="term" value="P:tetrahydrobiopterin biosynthetic process"/>
    <property type="evidence" value="ECO:0007669"/>
    <property type="project" value="TreeGrafter"/>
</dbReference>
<dbReference type="GO" id="GO:0046654">
    <property type="term" value="P:tetrahydrofolate biosynthetic process"/>
    <property type="evidence" value="ECO:0007669"/>
    <property type="project" value="UniProtKB-UniRule"/>
</dbReference>
<dbReference type="FunFam" id="1.10.286.10:FF:000002">
    <property type="entry name" value="GTP cyclohydrolase 1"/>
    <property type="match status" value="1"/>
</dbReference>
<dbReference type="FunFam" id="3.30.1130.10:FF:000001">
    <property type="entry name" value="GTP cyclohydrolase 1"/>
    <property type="match status" value="1"/>
</dbReference>
<dbReference type="Gene3D" id="1.10.286.10">
    <property type="match status" value="1"/>
</dbReference>
<dbReference type="Gene3D" id="3.30.1130.10">
    <property type="match status" value="1"/>
</dbReference>
<dbReference type="HAMAP" id="MF_00223">
    <property type="entry name" value="FolE"/>
    <property type="match status" value="1"/>
</dbReference>
<dbReference type="InterPro" id="IPR043133">
    <property type="entry name" value="GTP-CH-I_C/QueF"/>
</dbReference>
<dbReference type="InterPro" id="IPR043134">
    <property type="entry name" value="GTP-CH-I_N"/>
</dbReference>
<dbReference type="InterPro" id="IPR001474">
    <property type="entry name" value="GTP_CycHdrlase_I"/>
</dbReference>
<dbReference type="InterPro" id="IPR018234">
    <property type="entry name" value="GTP_CycHdrlase_I_CS"/>
</dbReference>
<dbReference type="InterPro" id="IPR020602">
    <property type="entry name" value="GTP_CycHdrlase_I_dom"/>
</dbReference>
<dbReference type="NCBIfam" id="TIGR00063">
    <property type="entry name" value="folE"/>
    <property type="match status" value="1"/>
</dbReference>
<dbReference type="NCBIfam" id="NF006824">
    <property type="entry name" value="PRK09347.1-1"/>
    <property type="match status" value="1"/>
</dbReference>
<dbReference type="NCBIfam" id="NF006825">
    <property type="entry name" value="PRK09347.1-2"/>
    <property type="match status" value="1"/>
</dbReference>
<dbReference type="NCBIfam" id="NF006826">
    <property type="entry name" value="PRK09347.1-3"/>
    <property type="match status" value="1"/>
</dbReference>
<dbReference type="PANTHER" id="PTHR11109:SF7">
    <property type="entry name" value="GTP CYCLOHYDROLASE 1"/>
    <property type="match status" value="1"/>
</dbReference>
<dbReference type="PANTHER" id="PTHR11109">
    <property type="entry name" value="GTP CYCLOHYDROLASE I"/>
    <property type="match status" value="1"/>
</dbReference>
<dbReference type="Pfam" id="PF01227">
    <property type="entry name" value="GTP_cyclohydroI"/>
    <property type="match status" value="1"/>
</dbReference>
<dbReference type="SUPFAM" id="SSF55620">
    <property type="entry name" value="Tetrahydrobiopterin biosynthesis enzymes-like"/>
    <property type="match status" value="1"/>
</dbReference>
<dbReference type="PROSITE" id="PS00859">
    <property type="entry name" value="GTP_CYCLOHYDROL_1_1"/>
    <property type="match status" value="1"/>
</dbReference>
<dbReference type="PROSITE" id="PS00860">
    <property type="entry name" value="GTP_CYCLOHYDROL_1_2"/>
    <property type="match status" value="1"/>
</dbReference>
<evidence type="ECO:0000255" key="1">
    <source>
        <dbReference type="HAMAP-Rule" id="MF_00223"/>
    </source>
</evidence>
<proteinExistence type="inferred from homology"/>